<keyword id="KW-0030">Aminoacyl-tRNA synthetase</keyword>
<keyword id="KW-0067">ATP-binding</keyword>
<keyword id="KW-0963">Cytoplasm</keyword>
<keyword id="KW-0436">Ligase</keyword>
<keyword id="KW-0479">Metal-binding</keyword>
<keyword id="KW-0547">Nucleotide-binding</keyword>
<keyword id="KW-0648">Protein biosynthesis</keyword>
<keyword id="KW-0862">Zinc</keyword>
<name>SYI_STRT1</name>
<evidence type="ECO:0000255" key="1">
    <source>
        <dbReference type="HAMAP-Rule" id="MF_02002"/>
    </source>
</evidence>
<organism>
    <name type="scientific">Streptococcus thermophilus (strain CNRZ 1066)</name>
    <dbReference type="NCBI Taxonomy" id="299768"/>
    <lineage>
        <taxon>Bacteria</taxon>
        <taxon>Bacillati</taxon>
        <taxon>Bacillota</taxon>
        <taxon>Bacilli</taxon>
        <taxon>Lactobacillales</taxon>
        <taxon>Streptococcaceae</taxon>
        <taxon>Streptococcus</taxon>
    </lineage>
</organism>
<protein>
    <recommendedName>
        <fullName evidence="1">Isoleucine--tRNA ligase</fullName>
        <ecNumber evidence="1">6.1.1.5</ecNumber>
    </recommendedName>
    <alternativeName>
        <fullName evidence="1">Isoleucyl-tRNA synthetase</fullName>
        <shortName evidence="1">IleRS</shortName>
    </alternativeName>
</protein>
<sequence>MKLKETLNLGKTSFPMRAGLPNKEPIWQKEWEEAKVYQRRQELNQGKPHFTLHDGPPYANGNIHVGHAMNKISKDIIVRSKSMSGFYAPFIPGWDTHGLPIEQVLAKQGVKRKELDRAEYLKMCRDYALSQVDKQREDFKRLGVSADWENPYVTLTPDYEAAQIRVFGEMAKKGYIYQGAKPVYWSWSSESALAEAEIEYHDLVSTSLYYANKVKDGKGVLDTDTYIVVWTTTPFTVTASRGLTVGADIEYVLVKPAGETRKFIVASELLNSLSEKFAWEEVEVLNTYRGDELNQIVTEHPWDSEVDELVILGEHVTTDSGTGIVHTAPGFGEDDYNVGVANGLEVVVTVNERGIMMENAGPDFAGKFYDKVAPIVMEKLGDLLLAKEEISHSYPFDWRTKKPIIWRAVPQWFASVSKFRQEILDEIEKVKFHSEWGKVRLYNMIRDRGDWVISRQRAWGVPLPIFYAEDRTPIMTEETIEHVAKLFEEHGSVIWWERDAKDLLPEGFTHPGSPNGEFTKENDIMDVWFDSGSSWNGVVVNRPELTYPADLYLEGSDQYRGWFNSSLITSVANHGVAPYKQLLSQGFALDGKGEKMSKSLGNTIAPSDVEKQFGAEILRLWVTSVDTSNDVRISMDILSQVSESYRKIRNTLRFLIANTSDFNPTTDAVAFEDLRSVDQYMTIRFNQLVKNIRDAYENFEFLTIYKSLVNFINVELSAFYLDFAKDVVYIESAKSLERRQMQTVFYDILVKITKLLTPILPHTAEEIWSYLEFENEDYVQLSELPEAEDFANQDALLEKWNAFMDFRGKAQKALEEARNEKVIGKSLEAHLTIYPDAEVKELLESLNTNLAQLLIVSALTIAEGDVPESAVRFQGVSFTVERAEGEVCDRCRRIDPTTKERSYNATICNHCASIIEENFAEVVAEGFEV</sequence>
<proteinExistence type="inferred from homology"/>
<gene>
    <name evidence="1" type="primary">ileS</name>
    <name type="ordered locus">str0741</name>
</gene>
<feature type="chain" id="PRO_0000098487" description="Isoleucine--tRNA ligase">
    <location>
        <begin position="1"/>
        <end position="929"/>
    </location>
</feature>
<feature type="short sequence motif" description="'HIGH' region">
    <location>
        <begin position="57"/>
        <end position="67"/>
    </location>
</feature>
<feature type="short sequence motif" description="'KMSKS' region">
    <location>
        <begin position="595"/>
        <end position="599"/>
    </location>
</feature>
<feature type="binding site" evidence="1">
    <location>
        <position position="554"/>
    </location>
    <ligand>
        <name>L-isoleucyl-5'-AMP</name>
        <dbReference type="ChEBI" id="CHEBI:178002"/>
    </ligand>
</feature>
<feature type="binding site" evidence="1">
    <location>
        <position position="598"/>
    </location>
    <ligand>
        <name>ATP</name>
        <dbReference type="ChEBI" id="CHEBI:30616"/>
    </ligand>
</feature>
<feature type="binding site" evidence="1">
    <location>
        <position position="888"/>
    </location>
    <ligand>
        <name>Zn(2+)</name>
        <dbReference type="ChEBI" id="CHEBI:29105"/>
    </ligand>
</feature>
<feature type="binding site" evidence="1">
    <location>
        <position position="891"/>
    </location>
    <ligand>
        <name>Zn(2+)</name>
        <dbReference type="ChEBI" id="CHEBI:29105"/>
    </ligand>
</feature>
<feature type="binding site" evidence="1">
    <location>
        <position position="908"/>
    </location>
    <ligand>
        <name>Zn(2+)</name>
        <dbReference type="ChEBI" id="CHEBI:29105"/>
    </ligand>
</feature>
<feature type="binding site" evidence="1">
    <location>
        <position position="911"/>
    </location>
    <ligand>
        <name>Zn(2+)</name>
        <dbReference type="ChEBI" id="CHEBI:29105"/>
    </ligand>
</feature>
<comment type="function">
    <text evidence="1">Catalyzes the attachment of isoleucine to tRNA(Ile). As IleRS can inadvertently accommodate and process structurally similar amino acids such as valine, to avoid such errors it has two additional distinct tRNA(Ile)-dependent editing activities. One activity is designated as 'pretransfer' editing and involves the hydrolysis of activated Val-AMP. The other activity is designated 'posttransfer' editing and involves deacylation of mischarged Val-tRNA(Ile).</text>
</comment>
<comment type="catalytic activity">
    <reaction evidence="1">
        <text>tRNA(Ile) + L-isoleucine + ATP = L-isoleucyl-tRNA(Ile) + AMP + diphosphate</text>
        <dbReference type="Rhea" id="RHEA:11060"/>
        <dbReference type="Rhea" id="RHEA-COMP:9666"/>
        <dbReference type="Rhea" id="RHEA-COMP:9695"/>
        <dbReference type="ChEBI" id="CHEBI:30616"/>
        <dbReference type="ChEBI" id="CHEBI:33019"/>
        <dbReference type="ChEBI" id="CHEBI:58045"/>
        <dbReference type="ChEBI" id="CHEBI:78442"/>
        <dbReference type="ChEBI" id="CHEBI:78528"/>
        <dbReference type="ChEBI" id="CHEBI:456215"/>
        <dbReference type="EC" id="6.1.1.5"/>
    </reaction>
</comment>
<comment type="cofactor">
    <cofactor evidence="1">
        <name>Zn(2+)</name>
        <dbReference type="ChEBI" id="CHEBI:29105"/>
    </cofactor>
    <text evidence="1">Binds 1 zinc ion per subunit.</text>
</comment>
<comment type="subunit">
    <text evidence="1">Monomer.</text>
</comment>
<comment type="subcellular location">
    <subcellularLocation>
        <location evidence="1">Cytoplasm</location>
    </subcellularLocation>
</comment>
<comment type="domain">
    <text evidence="1">IleRS has two distinct active sites: one for aminoacylation and one for editing. The misactivated valine is translocated from the active site to the editing site, which sterically excludes the correctly activated isoleucine. The single editing site contains two valyl binding pockets, one specific for each substrate (Val-AMP or Val-tRNA(Ile)).</text>
</comment>
<comment type="similarity">
    <text evidence="1">Belongs to the class-I aminoacyl-tRNA synthetase family. IleS type 1 subfamily.</text>
</comment>
<dbReference type="EC" id="6.1.1.5" evidence="1"/>
<dbReference type="EMBL" id="CP000024">
    <property type="protein sequence ID" value="AAV62334.1"/>
    <property type="molecule type" value="Genomic_DNA"/>
</dbReference>
<dbReference type="RefSeq" id="WP_002946450.1">
    <property type="nucleotide sequence ID" value="NC_006449.1"/>
</dbReference>
<dbReference type="SMR" id="Q5M0C5"/>
<dbReference type="GeneID" id="66898641"/>
<dbReference type="KEGG" id="stc:str0741"/>
<dbReference type="HOGENOM" id="CLU_001493_7_1_9"/>
<dbReference type="GO" id="GO:0005829">
    <property type="term" value="C:cytosol"/>
    <property type="evidence" value="ECO:0007669"/>
    <property type="project" value="TreeGrafter"/>
</dbReference>
<dbReference type="GO" id="GO:0002161">
    <property type="term" value="F:aminoacyl-tRNA deacylase activity"/>
    <property type="evidence" value="ECO:0007669"/>
    <property type="project" value="InterPro"/>
</dbReference>
<dbReference type="GO" id="GO:0005524">
    <property type="term" value="F:ATP binding"/>
    <property type="evidence" value="ECO:0007669"/>
    <property type="project" value="UniProtKB-UniRule"/>
</dbReference>
<dbReference type="GO" id="GO:0004822">
    <property type="term" value="F:isoleucine-tRNA ligase activity"/>
    <property type="evidence" value="ECO:0007669"/>
    <property type="project" value="UniProtKB-UniRule"/>
</dbReference>
<dbReference type="GO" id="GO:0000049">
    <property type="term" value="F:tRNA binding"/>
    <property type="evidence" value="ECO:0007669"/>
    <property type="project" value="InterPro"/>
</dbReference>
<dbReference type="GO" id="GO:0008270">
    <property type="term" value="F:zinc ion binding"/>
    <property type="evidence" value="ECO:0007669"/>
    <property type="project" value="UniProtKB-UniRule"/>
</dbReference>
<dbReference type="GO" id="GO:0006428">
    <property type="term" value="P:isoleucyl-tRNA aminoacylation"/>
    <property type="evidence" value="ECO:0007669"/>
    <property type="project" value="UniProtKB-UniRule"/>
</dbReference>
<dbReference type="CDD" id="cd07960">
    <property type="entry name" value="Anticodon_Ia_Ile_BEm"/>
    <property type="match status" value="1"/>
</dbReference>
<dbReference type="FunFam" id="1.10.10.830:FF:000001">
    <property type="entry name" value="Isoleucine--tRNA ligase"/>
    <property type="match status" value="1"/>
</dbReference>
<dbReference type="FunFam" id="1.10.730.20:FF:000001">
    <property type="entry name" value="Isoleucine--tRNA ligase"/>
    <property type="match status" value="1"/>
</dbReference>
<dbReference type="FunFam" id="3.40.50.620:FF:000092">
    <property type="entry name" value="Isoleucine--tRNA ligase"/>
    <property type="match status" value="1"/>
</dbReference>
<dbReference type="FunFam" id="3.90.740.10:FF:000006">
    <property type="entry name" value="Isoleucine--tRNA ligase"/>
    <property type="match status" value="1"/>
</dbReference>
<dbReference type="Gene3D" id="1.10.730.20">
    <property type="match status" value="1"/>
</dbReference>
<dbReference type="Gene3D" id="3.40.50.620">
    <property type="entry name" value="HUPs"/>
    <property type="match status" value="2"/>
</dbReference>
<dbReference type="Gene3D" id="1.10.10.830">
    <property type="entry name" value="Ile-tRNA synthetase CP2 domain-like"/>
    <property type="match status" value="1"/>
</dbReference>
<dbReference type="HAMAP" id="MF_02002">
    <property type="entry name" value="Ile_tRNA_synth_type1"/>
    <property type="match status" value="1"/>
</dbReference>
<dbReference type="InterPro" id="IPR001412">
    <property type="entry name" value="aa-tRNA-synth_I_CS"/>
</dbReference>
<dbReference type="InterPro" id="IPR002300">
    <property type="entry name" value="aa-tRNA-synth_Ia"/>
</dbReference>
<dbReference type="InterPro" id="IPR033708">
    <property type="entry name" value="Anticodon_Ile_BEm"/>
</dbReference>
<dbReference type="InterPro" id="IPR002301">
    <property type="entry name" value="Ile-tRNA-ligase"/>
</dbReference>
<dbReference type="InterPro" id="IPR023585">
    <property type="entry name" value="Ile-tRNA-ligase_type1"/>
</dbReference>
<dbReference type="InterPro" id="IPR050081">
    <property type="entry name" value="Ile-tRNA_ligase"/>
</dbReference>
<dbReference type="InterPro" id="IPR013155">
    <property type="entry name" value="M/V/L/I-tRNA-synth_anticd-bd"/>
</dbReference>
<dbReference type="InterPro" id="IPR014729">
    <property type="entry name" value="Rossmann-like_a/b/a_fold"/>
</dbReference>
<dbReference type="InterPro" id="IPR009080">
    <property type="entry name" value="tRNAsynth_Ia_anticodon-bd"/>
</dbReference>
<dbReference type="InterPro" id="IPR009008">
    <property type="entry name" value="Val/Leu/Ile-tRNA-synth_edit"/>
</dbReference>
<dbReference type="InterPro" id="IPR010663">
    <property type="entry name" value="Znf_FPG/IleRS"/>
</dbReference>
<dbReference type="NCBIfam" id="TIGR00392">
    <property type="entry name" value="ileS"/>
    <property type="match status" value="1"/>
</dbReference>
<dbReference type="PANTHER" id="PTHR42765:SF1">
    <property type="entry name" value="ISOLEUCINE--TRNA LIGASE, MITOCHONDRIAL"/>
    <property type="match status" value="1"/>
</dbReference>
<dbReference type="PANTHER" id="PTHR42765">
    <property type="entry name" value="SOLEUCYL-TRNA SYNTHETASE"/>
    <property type="match status" value="1"/>
</dbReference>
<dbReference type="Pfam" id="PF08264">
    <property type="entry name" value="Anticodon_1"/>
    <property type="match status" value="1"/>
</dbReference>
<dbReference type="Pfam" id="PF00133">
    <property type="entry name" value="tRNA-synt_1"/>
    <property type="match status" value="1"/>
</dbReference>
<dbReference type="Pfam" id="PF06827">
    <property type="entry name" value="zf-FPG_IleRS"/>
    <property type="match status" value="1"/>
</dbReference>
<dbReference type="PRINTS" id="PR00984">
    <property type="entry name" value="TRNASYNTHILE"/>
</dbReference>
<dbReference type="SUPFAM" id="SSF47323">
    <property type="entry name" value="Anticodon-binding domain of a subclass of class I aminoacyl-tRNA synthetases"/>
    <property type="match status" value="1"/>
</dbReference>
<dbReference type="SUPFAM" id="SSF52374">
    <property type="entry name" value="Nucleotidylyl transferase"/>
    <property type="match status" value="1"/>
</dbReference>
<dbReference type="SUPFAM" id="SSF50677">
    <property type="entry name" value="ValRS/IleRS/LeuRS editing domain"/>
    <property type="match status" value="1"/>
</dbReference>
<dbReference type="PROSITE" id="PS00178">
    <property type="entry name" value="AA_TRNA_LIGASE_I"/>
    <property type="match status" value="1"/>
</dbReference>
<accession>Q5M0C5</accession>
<reference key="1">
    <citation type="journal article" date="2004" name="Nat. Biotechnol.">
        <title>Complete sequence and comparative genome analysis of the dairy bacterium Streptococcus thermophilus.</title>
        <authorList>
            <person name="Bolotin A."/>
            <person name="Quinquis B."/>
            <person name="Renault P."/>
            <person name="Sorokin A."/>
            <person name="Ehrlich S.D."/>
            <person name="Kulakauskas S."/>
            <person name="Lapidus A."/>
            <person name="Goltsman E."/>
            <person name="Mazur M."/>
            <person name="Pusch G.D."/>
            <person name="Fonstein M."/>
            <person name="Overbeek R."/>
            <person name="Kyprides N."/>
            <person name="Purnelle B."/>
            <person name="Prozzi D."/>
            <person name="Ngui K."/>
            <person name="Masuy D."/>
            <person name="Hancy F."/>
            <person name="Burteau S."/>
            <person name="Boutry M."/>
            <person name="Delcour J."/>
            <person name="Goffeau A."/>
            <person name="Hols P."/>
        </authorList>
    </citation>
    <scope>NUCLEOTIDE SEQUENCE [LARGE SCALE GENOMIC DNA]</scope>
    <source>
        <strain>CNRZ 1066</strain>
    </source>
</reference>